<reference key="1">
    <citation type="journal article" date="2003" name="Proc. Natl. Acad. Sci. U.S.A.">
        <title>Reductive genome evolution in Buchnera aphidicola.</title>
        <authorList>
            <person name="van Ham R.C.H.J."/>
            <person name="Kamerbeek J."/>
            <person name="Palacios C."/>
            <person name="Rausell C."/>
            <person name="Abascal F."/>
            <person name="Bastolla U."/>
            <person name="Fernandez J.M."/>
            <person name="Jimenez L."/>
            <person name="Postigo M."/>
            <person name="Silva F.J."/>
            <person name="Tamames J."/>
            <person name="Viguera E."/>
            <person name="Latorre A."/>
            <person name="Valencia A."/>
            <person name="Moran F."/>
            <person name="Moya A."/>
        </authorList>
    </citation>
    <scope>NUCLEOTIDE SEQUENCE [LARGE SCALE GENOMIC DNA]</scope>
    <source>
        <strain>Bp</strain>
    </source>
</reference>
<gene>
    <name evidence="1" type="primary">rpmH</name>
    <name type="ordered locus">bbp_013</name>
</gene>
<name>RL34_BUCBP</name>
<sequence length="47" mass="5647">MKRTFQPSTLKRNRSHGFRARMSTKNGRHILSRRRSKFRTRLTVSSN</sequence>
<dbReference type="EMBL" id="AE016826">
    <property type="protein sequence ID" value="AAO26757.1"/>
    <property type="molecule type" value="Genomic_DNA"/>
</dbReference>
<dbReference type="RefSeq" id="WP_011091158.1">
    <property type="nucleotide sequence ID" value="NC_004545.1"/>
</dbReference>
<dbReference type="SMR" id="Q89B35"/>
<dbReference type="STRING" id="224915.bbp_013"/>
<dbReference type="KEGG" id="bab:bbp_013"/>
<dbReference type="eggNOG" id="COG0230">
    <property type="taxonomic scope" value="Bacteria"/>
</dbReference>
<dbReference type="HOGENOM" id="CLU_129938_2_1_6"/>
<dbReference type="OrthoDB" id="9804164at2"/>
<dbReference type="Proteomes" id="UP000000601">
    <property type="component" value="Chromosome"/>
</dbReference>
<dbReference type="GO" id="GO:1990904">
    <property type="term" value="C:ribonucleoprotein complex"/>
    <property type="evidence" value="ECO:0007669"/>
    <property type="project" value="UniProtKB-KW"/>
</dbReference>
<dbReference type="GO" id="GO:0005840">
    <property type="term" value="C:ribosome"/>
    <property type="evidence" value="ECO:0007669"/>
    <property type="project" value="UniProtKB-KW"/>
</dbReference>
<dbReference type="GO" id="GO:0003735">
    <property type="term" value="F:structural constituent of ribosome"/>
    <property type="evidence" value="ECO:0007669"/>
    <property type="project" value="InterPro"/>
</dbReference>
<dbReference type="GO" id="GO:0006412">
    <property type="term" value="P:translation"/>
    <property type="evidence" value="ECO:0007669"/>
    <property type="project" value="UniProtKB-UniRule"/>
</dbReference>
<dbReference type="FunFam" id="1.10.287.3980:FF:000001">
    <property type="entry name" value="Mitochondrial ribosomal protein L34"/>
    <property type="match status" value="1"/>
</dbReference>
<dbReference type="Gene3D" id="1.10.287.3980">
    <property type="match status" value="1"/>
</dbReference>
<dbReference type="HAMAP" id="MF_00391">
    <property type="entry name" value="Ribosomal_bL34"/>
    <property type="match status" value="1"/>
</dbReference>
<dbReference type="InterPro" id="IPR000271">
    <property type="entry name" value="Ribosomal_bL34"/>
</dbReference>
<dbReference type="InterPro" id="IPR020939">
    <property type="entry name" value="Ribosomal_bL34_CS"/>
</dbReference>
<dbReference type="NCBIfam" id="TIGR01030">
    <property type="entry name" value="rpmH_bact"/>
    <property type="match status" value="1"/>
</dbReference>
<dbReference type="PANTHER" id="PTHR14503:SF4">
    <property type="entry name" value="LARGE RIBOSOMAL SUBUNIT PROTEIN BL34M"/>
    <property type="match status" value="1"/>
</dbReference>
<dbReference type="PANTHER" id="PTHR14503">
    <property type="entry name" value="MITOCHONDRIAL RIBOSOMAL PROTEIN 34 FAMILY MEMBER"/>
    <property type="match status" value="1"/>
</dbReference>
<dbReference type="Pfam" id="PF00468">
    <property type="entry name" value="Ribosomal_L34"/>
    <property type="match status" value="1"/>
</dbReference>
<dbReference type="PROSITE" id="PS00784">
    <property type="entry name" value="RIBOSOMAL_L34"/>
    <property type="match status" value="1"/>
</dbReference>
<feature type="chain" id="PRO_0000187357" description="Large ribosomal subunit protein bL34">
    <location>
        <begin position="1"/>
        <end position="47"/>
    </location>
</feature>
<feature type="region of interest" description="Disordered" evidence="2">
    <location>
        <begin position="1"/>
        <end position="20"/>
    </location>
</feature>
<feature type="compositionally biased region" description="Polar residues" evidence="2">
    <location>
        <begin position="1"/>
        <end position="10"/>
    </location>
</feature>
<proteinExistence type="inferred from homology"/>
<protein>
    <recommendedName>
        <fullName evidence="1">Large ribosomal subunit protein bL34</fullName>
    </recommendedName>
    <alternativeName>
        <fullName evidence="3">50S ribosomal protein L34</fullName>
    </alternativeName>
</protein>
<comment type="similarity">
    <text evidence="1">Belongs to the bacterial ribosomal protein bL34 family.</text>
</comment>
<keyword id="KW-1185">Reference proteome</keyword>
<keyword id="KW-0687">Ribonucleoprotein</keyword>
<keyword id="KW-0689">Ribosomal protein</keyword>
<evidence type="ECO:0000255" key="1">
    <source>
        <dbReference type="HAMAP-Rule" id="MF_00391"/>
    </source>
</evidence>
<evidence type="ECO:0000256" key="2">
    <source>
        <dbReference type="SAM" id="MobiDB-lite"/>
    </source>
</evidence>
<evidence type="ECO:0000305" key="3"/>
<organism>
    <name type="scientific">Buchnera aphidicola subsp. Baizongia pistaciae (strain Bp)</name>
    <dbReference type="NCBI Taxonomy" id="224915"/>
    <lineage>
        <taxon>Bacteria</taxon>
        <taxon>Pseudomonadati</taxon>
        <taxon>Pseudomonadota</taxon>
        <taxon>Gammaproteobacteria</taxon>
        <taxon>Enterobacterales</taxon>
        <taxon>Erwiniaceae</taxon>
        <taxon>Buchnera</taxon>
    </lineage>
</organism>
<accession>Q89B35</accession>